<evidence type="ECO:0000255" key="1">
    <source>
        <dbReference type="HAMAP-Rule" id="MF_00129"/>
    </source>
</evidence>
<gene>
    <name evidence="1" type="primary">mnmG</name>
    <name evidence="1" type="synonym">gidA</name>
    <name type="ordered locus">Mmc1_3755</name>
</gene>
<reference key="1">
    <citation type="journal article" date="2009" name="Appl. Environ. Microbiol.">
        <title>Complete genome sequence of the chemolithoautotrophic marine magnetotactic coccus strain MC-1.</title>
        <authorList>
            <person name="Schubbe S."/>
            <person name="Williams T.J."/>
            <person name="Xie G."/>
            <person name="Kiss H.E."/>
            <person name="Brettin T.S."/>
            <person name="Martinez D."/>
            <person name="Ross C.A."/>
            <person name="Schuler D."/>
            <person name="Cox B.L."/>
            <person name="Nealson K.H."/>
            <person name="Bazylinski D.A."/>
        </authorList>
    </citation>
    <scope>NUCLEOTIDE SEQUENCE [LARGE SCALE GENOMIC DNA]</scope>
    <source>
        <strain>ATCC BAA-1437 / JCM 17883 / MC-1</strain>
    </source>
</reference>
<name>MNMG_MAGMM</name>
<proteinExistence type="inferred from homology"/>
<accession>A0LE47</accession>
<organism>
    <name type="scientific">Magnetococcus marinus (strain ATCC BAA-1437 / JCM 17883 / MC-1)</name>
    <dbReference type="NCBI Taxonomy" id="156889"/>
    <lineage>
        <taxon>Bacteria</taxon>
        <taxon>Pseudomonadati</taxon>
        <taxon>Pseudomonadota</taxon>
        <taxon>Alphaproteobacteria</taxon>
        <taxon>Magnetococcales</taxon>
        <taxon>Magnetococcaceae</taxon>
        <taxon>Magnetococcus</taxon>
    </lineage>
</organism>
<feature type="chain" id="PRO_0000345294" description="tRNA uridine 5-carboxymethylaminomethyl modification enzyme MnmG">
    <location>
        <begin position="1"/>
        <end position="599"/>
    </location>
</feature>
<feature type="binding site" evidence="1">
    <location>
        <begin position="12"/>
        <end position="17"/>
    </location>
    <ligand>
        <name>FAD</name>
        <dbReference type="ChEBI" id="CHEBI:57692"/>
    </ligand>
</feature>
<feature type="binding site" evidence="1">
    <location>
        <position position="124"/>
    </location>
    <ligand>
        <name>FAD</name>
        <dbReference type="ChEBI" id="CHEBI:57692"/>
    </ligand>
</feature>
<feature type="binding site" evidence="1">
    <location>
        <position position="179"/>
    </location>
    <ligand>
        <name>FAD</name>
        <dbReference type="ChEBI" id="CHEBI:57692"/>
    </ligand>
</feature>
<feature type="binding site" evidence="1">
    <location>
        <begin position="271"/>
        <end position="285"/>
    </location>
    <ligand>
        <name>NAD(+)</name>
        <dbReference type="ChEBI" id="CHEBI:57540"/>
    </ligand>
</feature>
<feature type="binding site" evidence="1">
    <location>
        <position position="368"/>
    </location>
    <ligand>
        <name>FAD</name>
        <dbReference type="ChEBI" id="CHEBI:57692"/>
    </ligand>
</feature>
<sequence length="599" mass="66850">MFNQHFDVVVVGAGHAGCEAAHAAATLGCRTLLSTQVIDSIGQMSCNPAIGGIGKGHLVKELDALGGVMGIVADQSGIQFKKLNQRKGPAVHGSRAQIDKMAYRKNMKKILDACANLEIKQAEVVELIIKNSCVVGVKTDWNEVYSCGAIVIATGTFLDGLIHIGERKFPSGRLGDKESHPLAVNIKSLGLKISRFKTGTPPRLDGRTVNIEKLNRQDGDAIPSPFSFMHDKIERPEMPCWIAQTSKETKQIIEKNIHRSAMYSGQIEGVGPRYCPSIEDKIKKFKEREVHQVFLEPEGENTNEMYVNGVSTSMPIDVQWQMIRSIVGLENAQIVKPGYAIEYDMVMPTELDHTLKTKKYDGLYLAGQINGTTGYEEAAAQGMIAGLNAARFAKKESSYRFERYDGYFGVMVDDLVTRGVDEPYRMFTSRSELRIVHREDNADMRLTPLGHELGLVGHKRWEKYLSKKKQYDLLEDLSQKFKINGQPVSEILKRTDCDLEKVCEAMQLDALSKNVLEIYKNDLIYSGYEKKIIAENSRVEKYRSHVLPKEIDWSKVASLSSEVRLRLEKSDCRTVADVIATKGVTPASVVNILIYLGLK</sequence>
<dbReference type="EMBL" id="CP000471">
    <property type="protein sequence ID" value="ABK46240.1"/>
    <property type="molecule type" value="Genomic_DNA"/>
</dbReference>
<dbReference type="RefSeq" id="WP_011715292.1">
    <property type="nucleotide sequence ID" value="NC_008576.1"/>
</dbReference>
<dbReference type="SMR" id="A0LE47"/>
<dbReference type="STRING" id="156889.Mmc1_3755"/>
<dbReference type="KEGG" id="mgm:Mmc1_3755"/>
<dbReference type="eggNOG" id="COG0445">
    <property type="taxonomic scope" value="Bacteria"/>
</dbReference>
<dbReference type="HOGENOM" id="CLU_007831_2_2_5"/>
<dbReference type="OrthoDB" id="9815560at2"/>
<dbReference type="Proteomes" id="UP000002586">
    <property type="component" value="Chromosome"/>
</dbReference>
<dbReference type="GO" id="GO:0005829">
    <property type="term" value="C:cytosol"/>
    <property type="evidence" value="ECO:0007669"/>
    <property type="project" value="TreeGrafter"/>
</dbReference>
<dbReference type="GO" id="GO:0050660">
    <property type="term" value="F:flavin adenine dinucleotide binding"/>
    <property type="evidence" value="ECO:0007669"/>
    <property type="project" value="UniProtKB-UniRule"/>
</dbReference>
<dbReference type="GO" id="GO:0030488">
    <property type="term" value="P:tRNA methylation"/>
    <property type="evidence" value="ECO:0007669"/>
    <property type="project" value="TreeGrafter"/>
</dbReference>
<dbReference type="GO" id="GO:0002098">
    <property type="term" value="P:tRNA wobble uridine modification"/>
    <property type="evidence" value="ECO:0007669"/>
    <property type="project" value="InterPro"/>
</dbReference>
<dbReference type="FunFam" id="3.50.50.60:FF:000002">
    <property type="entry name" value="tRNA uridine 5-carboxymethylaminomethyl modification enzyme MnmG"/>
    <property type="match status" value="1"/>
</dbReference>
<dbReference type="Gene3D" id="3.50.50.60">
    <property type="entry name" value="FAD/NAD(P)-binding domain"/>
    <property type="match status" value="2"/>
</dbReference>
<dbReference type="Gene3D" id="1.10.150.570">
    <property type="entry name" value="GidA associated domain, C-terminal subdomain"/>
    <property type="match status" value="1"/>
</dbReference>
<dbReference type="HAMAP" id="MF_00129">
    <property type="entry name" value="MnmG_GidA"/>
    <property type="match status" value="1"/>
</dbReference>
<dbReference type="InterPro" id="IPR036188">
    <property type="entry name" value="FAD/NAD-bd_sf"/>
</dbReference>
<dbReference type="InterPro" id="IPR004416">
    <property type="entry name" value="MnmG"/>
</dbReference>
<dbReference type="InterPro" id="IPR002218">
    <property type="entry name" value="MnmG-rel"/>
</dbReference>
<dbReference type="InterPro" id="IPR020595">
    <property type="entry name" value="MnmG-rel_CS"/>
</dbReference>
<dbReference type="InterPro" id="IPR026904">
    <property type="entry name" value="MnmG_C"/>
</dbReference>
<dbReference type="InterPro" id="IPR047001">
    <property type="entry name" value="MnmG_C_subdom"/>
</dbReference>
<dbReference type="InterPro" id="IPR044920">
    <property type="entry name" value="MnmG_C_subdom_sf"/>
</dbReference>
<dbReference type="InterPro" id="IPR040131">
    <property type="entry name" value="MnmG_N"/>
</dbReference>
<dbReference type="NCBIfam" id="TIGR00136">
    <property type="entry name" value="mnmG_gidA"/>
    <property type="match status" value="1"/>
</dbReference>
<dbReference type="PANTHER" id="PTHR11806">
    <property type="entry name" value="GLUCOSE INHIBITED DIVISION PROTEIN A"/>
    <property type="match status" value="1"/>
</dbReference>
<dbReference type="PANTHER" id="PTHR11806:SF0">
    <property type="entry name" value="PROTEIN MTO1 HOMOLOG, MITOCHONDRIAL"/>
    <property type="match status" value="1"/>
</dbReference>
<dbReference type="Pfam" id="PF01134">
    <property type="entry name" value="GIDA"/>
    <property type="match status" value="1"/>
</dbReference>
<dbReference type="Pfam" id="PF13932">
    <property type="entry name" value="SAM_GIDA_C"/>
    <property type="match status" value="1"/>
</dbReference>
<dbReference type="PRINTS" id="PR00411">
    <property type="entry name" value="PNDRDTASEI"/>
</dbReference>
<dbReference type="SMART" id="SM01228">
    <property type="entry name" value="GIDA_assoc_3"/>
    <property type="match status" value="1"/>
</dbReference>
<dbReference type="SUPFAM" id="SSF51905">
    <property type="entry name" value="FAD/NAD(P)-binding domain"/>
    <property type="match status" value="1"/>
</dbReference>
<dbReference type="PROSITE" id="PS01280">
    <property type="entry name" value="GIDA_1"/>
    <property type="match status" value="1"/>
</dbReference>
<dbReference type="PROSITE" id="PS01281">
    <property type="entry name" value="GIDA_2"/>
    <property type="match status" value="1"/>
</dbReference>
<comment type="function">
    <text evidence="1">NAD-binding protein involved in the addition of a carboxymethylaminomethyl (cmnm) group at the wobble position (U34) of certain tRNAs, forming tRNA-cmnm(5)s(2)U34.</text>
</comment>
<comment type="cofactor">
    <cofactor evidence="1">
        <name>FAD</name>
        <dbReference type="ChEBI" id="CHEBI:57692"/>
    </cofactor>
</comment>
<comment type="subunit">
    <text evidence="1">Homodimer. Heterotetramer of two MnmE and two MnmG subunits.</text>
</comment>
<comment type="subcellular location">
    <subcellularLocation>
        <location evidence="1">Cytoplasm</location>
    </subcellularLocation>
</comment>
<comment type="similarity">
    <text evidence="1">Belongs to the MnmG family.</text>
</comment>
<keyword id="KW-0963">Cytoplasm</keyword>
<keyword id="KW-0274">FAD</keyword>
<keyword id="KW-0285">Flavoprotein</keyword>
<keyword id="KW-0520">NAD</keyword>
<keyword id="KW-1185">Reference proteome</keyword>
<keyword id="KW-0819">tRNA processing</keyword>
<protein>
    <recommendedName>
        <fullName evidence="1">tRNA uridine 5-carboxymethylaminomethyl modification enzyme MnmG</fullName>
    </recommendedName>
    <alternativeName>
        <fullName evidence="1">Glucose-inhibited division protein A</fullName>
    </alternativeName>
</protein>